<keyword id="KW-1185">Reference proteome</keyword>
<keyword id="KW-0677">Repeat</keyword>
<keyword id="KW-0808">Transferase</keyword>
<keyword id="KW-0833">Ubl conjugation pathway</keyword>
<feature type="chain" id="PRO_0000322151" description="U-box domain-containing protein 6">
    <location>
        <begin position="1"/>
        <end position="771"/>
    </location>
</feature>
<feature type="domain" description="U-box">
    <location>
        <begin position="274"/>
        <end position="348"/>
    </location>
</feature>
<feature type="repeat" description="ARM 1">
    <location>
        <begin position="456"/>
        <end position="499"/>
    </location>
</feature>
<feature type="repeat" description="ARM 2">
    <location>
        <begin position="502"/>
        <end position="542"/>
    </location>
</feature>
<feature type="repeat" description="ARM 3">
    <location>
        <begin position="544"/>
        <end position="581"/>
    </location>
</feature>
<feature type="repeat" description="ARM 4">
    <location>
        <begin position="583"/>
        <end position="622"/>
    </location>
</feature>
<feature type="repeat" description="ARM 5">
    <location>
        <begin position="625"/>
        <end position="664"/>
    </location>
</feature>
<feature type="region of interest" description="Disordered" evidence="2">
    <location>
        <begin position="394"/>
        <end position="415"/>
    </location>
</feature>
<feature type="region of interest" description="Disordered" evidence="2">
    <location>
        <begin position="706"/>
        <end position="751"/>
    </location>
</feature>
<feature type="compositionally biased region" description="Basic and acidic residues" evidence="2">
    <location>
        <begin position="400"/>
        <end position="411"/>
    </location>
</feature>
<feature type="compositionally biased region" description="Basic and acidic residues" evidence="2">
    <location>
        <begin position="706"/>
        <end position="722"/>
    </location>
</feature>
<reference key="1">
    <citation type="journal article" date="2000" name="Nature">
        <title>Sequence and analysis of chromosome 1 of the plant Arabidopsis thaliana.</title>
        <authorList>
            <person name="Theologis A."/>
            <person name="Ecker J.R."/>
            <person name="Palm C.J."/>
            <person name="Federspiel N.A."/>
            <person name="Kaul S."/>
            <person name="White O."/>
            <person name="Alonso J."/>
            <person name="Altafi H."/>
            <person name="Araujo R."/>
            <person name="Bowman C.L."/>
            <person name="Brooks S.Y."/>
            <person name="Buehler E."/>
            <person name="Chan A."/>
            <person name="Chao Q."/>
            <person name="Chen H."/>
            <person name="Cheuk R.F."/>
            <person name="Chin C.W."/>
            <person name="Chung M.K."/>
            <person name="Conn L."/>
            <person name="Conway A.B."/>
            <person name="Conway A.R."/>
            <person name="Creasy T.H."/>
            <person name="Dewar K."/>
            <person name="Dunn P."/>
            <person name="Etgu P."/>
            <person name="Feldblyum T.V."/>
            <person name="Feng J.-D."/>
            <person name="Fong B."/>
            <person name="Fujii C.Y."/>
            <person name="Gill J.E."/>
            <person name="Goldsmith A.D."/>
            <person name="Haas B."/>
            <person name="Hansen N.F."/>
            <person name="Hughes B."/>
            <person name="Huizar L."/>
            <person name="Hunter J.L."/>
            <person name="Jenkins J."/>
            <person name="Johnson-Hopson C."/>
            <person name="Khan S."/>
            <person name="Khaykin E."/>
            <person name="Kim C.J."/>
            <person name="Koo H.L."/>
            <person name="Kremenetskaia I."/>
            <person name="Kurtz D.B."/>
            <person name="Kwan A."/>
            <person name="Lam B."/>
            <person name="Langin-Hooper S."/>
            <person name="Lee A."/>
            <person name="Lee J.M."/>
            <person name="Lenz C.A."/>
            <person name="Li J.H."/>
            <person name="Li Y.-P."/>
            <person name="Lin X."/>
            <person name="Liu S.X."/>
            <person name="Liu Z.A."/>
            <person name="Luros J.S."/>
            <person name="Maiti R."/>
            <person name="Marziali A."/>
            <person name="Militscher J."/>
            <person name="Miranda M."/>
            <person name="Nguyen M."/>
            <person name="Nierman W.C."/>
            <person name="Osborne B.I."/>
            <person name="Pai G."/>
            <person name="Peterson J."/>
            <person name="Pham P.K."/>
            <person name="Rizzo M."/>
            <person name="Rooney T."/>
            <person name="Rowley D."/>
            <person name="Sakano H."/>
            <person name="Salzberg S.L."/>
            <person name="Schwartz J.R."/>
            <person name="Shinn P."/>
            <person name="Southwick A.M."/>
            <person name="Sun H."/>
            <person name="Tallon L.J."/>
            <person name="Tambunga G."/>
            <person name="Toriumi M.J."/>
            <person name="Town C.D."/>
            <person name="Utterback T."/>
            <person name="Van Aken S."/>
            <person name="Vaysberg M."/>
            <person name="Vysotskaia V.S."/>
            <person name="Walker M."/>
            <person name="Wu D."/>
            <person name="Yu G."/>
            <person name="Fraser C.M."/>
            <person name="Venter J.C."/>
            <person name="Davis R.W."/>
        </authorList>
    </citation>
    <scope>NUCLEOTIDE SEQUENCE [LARGE SCALE GENOMIC DNA]</scope>
    <source>
        <strain>cv. Columbia</strain>
    </source>
</reference>
<reference key="2">
    <citation type="journal article" date="2017" name="Plant J.">
        <title>Araport11: a complete reannotation of the Arabidopsis thaliana reference genome.</title>
        <authorList>
            <person name="Cheng C.Y."/>
            <person name="Krishnakumar V."/>
            <person name="Chan A.P."/>
            <person name="Thibaud-Nissen F."/>
            <person name="Schobel S."/>
            <person name="Town C.D."/>
        </authorList>
    </citation>
    <scope>GENOME REANNOTATION</scope>
    <source>
        <strain>cv. Columbia</strain>
    </source>
</reference>
<reference key="3">
    <citation type="journal article" date="2001" name="Trends Plant Sci.">
        <title>The U-box protein family in plants.</title>
        <authorList>
            <person name="Azevedo C."/>
            <person name="Santos-Rosa M.J."/>
            <person name="Shirasu K."/>
        </authorList>
    </citation>
    <scope>GENE FAMILY ORGANIZATION</scope>
    <scope>NOMENCLATURE</scope>
</reference>
<reference key="4">
    <citation type="journal article" date="2004" name="Plant Physiol.">
        <title>A large complement of the predicted Arabidopsis ARM repeat proteins are members of the U-box E3 ubiquitin ligase family.</title>
        <authorList>
            <person name="Mudgil Y."/>
            <person name="Shiu S.-H."/>
            <person name="Stone S.L."/>
            <person name="Salt J.N."/>
            <person name="Goring D.R."/>
        </authorList>
    </citation>
    <scope>GENE FAMILY ORGANIZATION</scope>
</reference>
<organism>
    <name type="scientific">Arabidopsis thaliana</name>
    <name type="common">Mouse-ear cress</name>
    <dbReference type="NCBI Taxonomy" id="3702"/>
    <lineage>
        <taxon>Eukaryota</taxon>
        <taxon>Viridiplantae</taxon>
        <taxon>Streptophyta</taxon>
        <taxon>Embryophyta</taxon>
        <taxon>Tracheophyta</taxon>
        <taxon>Spermatophyta</taxon>
        <taxon>Magnoliopsida</taxon>
        <taxon>eudicotyledons</taxon>
        <taxon>Gunneridae</taxon>
        <taxon>Pentapetalae</taxon>
        <taxon>rosids</taxon>
        <taxon>malvids</taxon>
        <taxon>Brassicales</taxon>
        <taxon>Brassicaceae</taxon>
        <taxon>Camelineae</taxon>
        <taxon>Arabidopsis</taxon>
    </lineage>
</organism>
<name>PUB6_ARATH</name>
<sequence length="771" mass="85319">MDVSELEENLFAASDAKLHGDMCKELSAVYCKVLSIFPSLEEARPRSKSGIQTLCSLHIALEKAKNILQHCSECSKLYLAITGDAVLLKFEKAKSALIDSLRRVEDIVPSSIGSQILDIVGELEHTKFLLDPSEKEVGDRIIALLQQGKKFDNGSDSTELEIFHQAATRLSITSSRSALAERRALKKVIDRARVEEDKRKESIVAYLLHLMRKYSKLFRSEMMDENDSPCSTPCSPTGQGPNEDRVNAFGRQLSKFGSINYKPMNSRKSGQMPIPPEELRCPISLQLMYDPVIIASGQTYERVCIEKWFSDGHNSCPKTQQQLPHLSLTPNYCVKGLIASWCEQNGITVPTGPPESLDLNYWRLAMSDSESPNSKSVDSVGLCTPKDIRVVPLEESSTIESERQQKEKNNAPDEVDSEINVLEGYQDILAIVDKEEDLAKKCKVVENVRILLKDNEEARILMGANGFVEAFLQFLESAVHDNNAAAQETGAMALFNLAVNNNRNKELMLTSGVIPLLEKMISCSQSQGPATALYLNLSCLEKAKPVIGSSQAVSFFVNLLLQDTKTQCKLDALHALYNLSTYSPNIPTLLSSNIIKSLQVLASTGNHLWIEKSLAVLLNLASSREGKEEMITTQGMISTLATVLDTGDTVEQEQAVSCLVILCTGSESCIQMVLQEGVIPSLVSISVNGSPRGRDKSQKLLMLFREQRHRDQPSPNKEEAPRKTVSAPMAIPAPVSAPESEVKPLTKSISRRKTMTRPFSFLWKKSHSIHH</sequence>
<accession>O48700</accession>
<gene>
    <name type="primary">PUB6</name>
    <name type="ordered locus">At1g24330</name>
    <name type="ORF">F3I6.27</name>
</gene>
<comment type="function">
    <text evidence="1">Functions as an E3 ubiquitin ligase.</text>
</comment>
<comment type="catalytic activity">
    <reaction>
        <text>S-ubiquitinyl-[E2 ubiquitin-conjugating enzyme]-L-cysteine + [acceptor protein]-L-lysine = [E2 ubiquitin-conjugating enzyme]-L-cysteine + N(6)-ubiquitinyl-[acceptor protein]-L-lysine.</text>
        <dbReference type="EC" id="2.3.2.27"/>
    </reaction>
</comment>
<comment type="pathway">
    <text>Protein modification; protein ubiquitination.</text>
</comment>
<comment type="sequence caution" evidence="3">
    <conflict type="erroneous gene model prediction">
        <sequence resource="EMBL-CDS" id="AAC00595"/>
    </conflict>
</comment>
<proteinExistence type="evidence at transcript level"/>
<dbReference type="EC" id="2.3.2.27"/>
<dbReference type="EMBL" id="AC002396">
    <property type="protein sequence ID" value="AAC00595.1"/>
    <property type="status" value="ALT_SEQ"/>
    <property type="molecule type" value="Genomic_DNA"/>
</dbReference>
<dbReference type="EMBL" id="CP002684">
    <property type="protein sequence ID" value="AEE30517.1"/>
    <property type="molecule type" value="Genomic_DNA"/>
</dbReference>
<dbReference type="EMBL" id="CP002684">
    <property type="protein sequence ID" value="ANM61155.1"/>
    <property type="molecule type" value="Genomic_DNA"/>
</dbReference>
<dbReference type="PIR" id="T00664">
    <property type="entry name" value="T00664"/>
</dbReference>
<dbReference type="RefSeq" id="NP_001323390.1">
    <property type="nucleotide sequence ID" value="NM_001332646.1"/>
</dbReference>
<dbReference type="RefSeq" id="NP_173843.2">
    <property type="nucleotide sequence ID" value="NM_102279.4"/>
</dbReference>
<dbReference type="SMR" id="O48700"/>
<dbReference type="STRING" id="3702.O48700"/>
<dbReference type="iPTMnet" id="O48700"/>
<dbReference type="PaxDb" id="3702-AT1G24330.1"/>
<dbReference type="ProteomicsDB" id="226258"/>
<dbReference type="EnsemblPlants" id="AT1G24330.1">
    <property type="protein sequence ID" value="AT1G24330.1"/>
    <property type="gene ID" value="AT1G24330"/>
</dbReference>
<dbReference type="EnsemblPlants" id="AT1G24330.2">
    <property type="protein sequence ID" value="AT1G24330.2"/>
    <property type="gene ID" value="AT1G24330"/>
</dbReference>
<dbReference type="GeneID" id="839049"/>
<dbReference type="Gramene" id="AT1G24330.1">
    <property type="protein sequence ID" value="AT1G24330.1"/>
    <property type="gene ID" value="AT1G24330"/>
</dbReference>
<dbReference type="Gramene" id="AT1G24330.2">
    <property type="protein sequence ID" value="AT1G24330.2"/>
    <property type="gene ID" value="AT1G24330"/>
</dbReference>
<dbReference type="KEGG" id="ath:AT1G24330"/>
<dbReference type="Araport" id="AT1G24330"/>
<dbReference type="TAIR" id="AT1G24330"/>
<dbReference type="eggNOG" id="KOG0167">
    <property type="taxonomic scope" value="Eukaryota"/>
</dbReference>
<dbReference type="HOGENOM" id="CLU_006348_4_1_1"/>
<dbReference type="InParanoid" id="O48700"/>
<dbReference type="OMA" id="LMMFREQ"/>
<dbReference type="PhylomeDB" id="O48700"/>
<dbReference type="UniPathway" id="UPA00143"/>
<dbReference type="PRO" id="PR:O48700"/>
<dbReference type="Proteomes" id="UP000006548">
    <property type="component" value="Chromosome 1"/>
</dbReference>
<dbReference type="ExpressionAtlas" id="O48700">
    <property type="expression patterns" value="baseline and differential"/>
</dbReference>
<dbReference type="GO" id="GO:0009507">
    <property type="term" value="C:chloroplast"/>
    <property type="evidence" value="ECO:0007005"/>
    <property type="project" value="TAIR"/>
</dbReference>
<dbReference type="GO" id="GO:0004842">
    <property type="term" value="F:ubiquitin-protein transferase activity"/>
    <property type="evidence" value="ECO:0007669"/>
    <property type="project" value="InterPro"/>
</dbReference>
<dbReference type="GO" id="GO:0016567">
    <property type="term" value="P:protein ubiquitination"/>
    <property type="evidence" value="ECO:0007669"/>
    <property type="project" value="UniProtKB-UniPathway"/>
</dbReference>
<dbReference type="CDD" id="cd16664">
    <property type="entry name" value="RING-Ubox_PUB"/>
    <property type="match status" value="1"/>
</dbReference>
<dbReference type="FunFam" id="1.25.10.10:FF:000310">
    <property type="entry name" value="RING-type E3 ubiquitin transferase"/>
    <property type="match status" value="1"/>
</dbReference>
<dbReference type="FunFam" id="3.30.40.10:FF:000114">
    <property type="entry name" value="RING-type E3 ubiquitin transferase"/>
    <property type="match status" value="1"/>
</dbReference>
<dbReference type="Gene3D" id="1.25.10.10">
    <property type="entry name" value="Leucine-rich Repeat Variant"/>
    <property type="match status" value="1"/>
</dbReference>
<dbReference type="Gene3D" id="3.30.40.10">
    <property type="entry name" value="Zinc/RING finger domain, C3HC4 (zinc finger)"/>
    <property type="match status" value="1"/>
</dbReference>
<dbReference type="InterPro" id="IPR011989">
    <property type="entry name" value="ARM-like"/>
</dbReference>
<dbReference type="InterPro" id="IPR006911">
    <property type="entry name" value="ARM-rpt_dom"/>
</dbReference>
<dbReference type="InterPro" id="IPR016024">
    <property type="entry name" value="ARM-type_fold"/>
</dbReference>
<dbReference type="InterPro" id="IPR000225">
    <property type="entry name" value="Armadillo"/>
</dbReference>
<dbReference type="InterPro" id="IPR045210">
    <property type="entry name" value="RING-Ubox_PUB"/>
</dbReference>
<dbReference type="InterPro" id="IPR003613">
    <property type="entry name" value="Ubox_domain"/>
</dbReference>
<dbReference type="InterPro" id="IPR013083">
    <property type="entry name" value="Znf_RING/FYVE/PHD"/>
</dbReference>
<dbReference type="PANTHER" id="PTHR23315">
    <property type="entry name" value="U BOX DOMAIN-CONTAINING"/>
    <property type="match status" value="1"/>
</dbReference>
<dbReference type="PANTHER" id="PTHR23315:SF332">
    <property type="entry name" value="U-BOX DOMAIN-CONTAINING PROTEIN 6"/>
    <property type="match status" value="1"/>
</dbReference>
<dbReference type="Pfam" id="PF04826">
    <property type="entry name" value="Arm_2"/>
    <property type="match status" value="1"/>
</dbReference>
<dbReference type="Pfam" id="PF04564">
    <property type="entry name" value="U-box"/>
    <property type="match status" value="1"/>
</dbReference>
<dbReference type="SMART" id="SM00185">
    <property type="entry name" value="ARM"/>
    <property type="match status" value="4"/>
</dbReference>
<dbReference type="SMART" id="SM00504">
    <property type="entry name" value="Ubox"/>
    <property type="match status" value="1"/>
</dbReference>
<dbReference type="SUPFAM" id="SSF48371">
    <property type="entry name" value="ARM repeat"/>
    <property type="match status" value="1"/>
</dbReference>
<dbReference type="SUPFAM" id="SSF57850">
    <property type="entry name" value="RING/U-box"/>
    <property type="match status" value="1"/>
</dbReference>
<dbReference type="PROSITE" id="PS50176">
    <property type="entry name" value="ARM_REPEAT"/>
    <property type="match status" value="1"/>
</dbReference>
<dbReference type="PROSITE" id="PS51698">
    <property type="entry name" value="U_BOX"/>
    <property type="match status" value="1"/>
</dbReference>
<protein>
    <recommendedName>
        <fullName>U-box domain-containing protein 6</fullName>
        <ecNumber>2.3.2.27</ecNumber>
    </recommendedName>
    <alternativeName>
        <fullName>Plant U-box protein 6</fullName>
    </alternativeName>
    <alternativeName>
        <fullName evidence="3">RING-type E3 ubiquitin transferase PUB6</fullName>
    </alternativeName>
</protein>
<evidence type="ECO:0000250" key="1"/>
<evidence type="ECO:0000256" key="2">
    <source>
        <dbReference type="SAM" id="MobiDB-lite"/>
    </source>
</evidence>
<evidence type="ECO:0000305" key="3"/>